<feature type="chain" id="PRO_1000136897" description="UPF0283 membrane protein YcjF">
    <location>
        <begin position="1"/>
        <end position="353"/>
    </location>
</feature>
<feature type="transmembrane region" description="Helical" evidence="1">
    <location>
        <begin position="70"/>
        <end position="90"/>
    </location>
</feature>
<feature type="transmembrane region" description="Helical" evidence="1">
    <location>
        <begin position="100"/>
        <end position="120"/>
    </location>
</feature>
<feature type="transmembrane region" description="Helical" evidence="1">
    <location>
        <begin position="213"/>
        <end position="233"/>
    </location>
</feature>
<feature type="region of interest" description="Disordered" evidence="2">
    <location>
        <begin position="16"/>
        <end position="35"/>
    </location>
</feature>
<feature type="compositionally biased region" description="Polar residues" evidence="2">
    <location>
        <begin position="20"/>
        <end position="31"/>
    </location>
</feature>
<gene>
    <name evidence="1" type="primary">ycjF</name>
    <name type="ordered locus">SeHA_C1870</name>
</gene>
<protein>
    <recommendedName>
        <fullName evidence="1">UPF0283 membrane protein YcjF</fullName>
    </recommendedName>
</protein>
<dbReference type="EMBL" id="CP001120">
    <property type="protein sequence ID" value="ACF68530.1"/>
    <property type="molecule type" value="Genomic_DNA"/>
</dbReference>
<dbReference type="RefSeq" id="WP_001294480.1">
    <property type="nucleotide sequence ID" value="NC_011083.1"/>
</dbReference>
<dbReference type="KEGG" id="seh:SeHA_C1870"/>
<dbReference type="HOGENOM" id="CLU_057693_2_0_6"/>
<dbReference type="Proteomes" id="UP000001866">
    <property type="component" value="Chromosome"/>
</dbReference>
<dbReference type="GO" id="GO:0005886">
    <property type="term" value="C:plasma membrane"/>
    <property type="evidence" value="ECO:0007669"/>
    <property type="project" value="UniProtKB-SubCell"/>
</dbReference>
<dbReference type="HAMAP" id="MF_01085">
    <property type="entry name" value="UPF0283"/>
    <property type="match status" value="1"/>
</dbReference>
<dbReference type="InterPro" id="IPR021147">
    <property type="entry name" value="DUF697"/>
</dbReference>
<dbReference type="InterPro" id="IPR006507">
    <property type="entry name" value="UPF0283"/>
</dbReference>
<dbReference type="NCBIfam" id="TIGR01620">
    <property type="entry name" value="hyp_HI0043"/>
    <property type="match status" value="1"/>
</dbReference>
<dbReference type="PANTHER" id="PTHR39342">
    <property type="entry name" value="UPF0283 MEMBRANE PROTEIN YCJF"/>
    <property type="match status" value="1"/>
</dbReference>
<dbReference type="PANTHER" id="PTHR39342:SF1">
    <property type="entry name" value="UPF0283 MEMBRANE PROTEIN YCJF"/>
    <property type="match status" value="1"/>
</dbReference>
<dbReference type="Pfam" id="PF05128">
    <property type="entry name" value="DUF697"/>
    <property type="match status" value="1"/>
</dbReference>
<proteinExistence type="inferred from homology"/>
<organism>
    <name type="scientific">Salmonella heidelberg (strain SL476)</name>
    <dbReference type="NCBI Taxonomy" id="454169"/>
    <lineage>
        <taxon>Bacteria</taxon>
        <taxon>Pseudomonadati</taxon>
        <taxon>Pseudomonadota</taxon>
        <taxon>Gammaproteobacteria</taxon>
        <taxon>Enterobacterales</taxon>
        <taxon>Enterobacteriaceae</taxon>
        <taxon>Salmonella</taxon>
    </lineage>
</organism>
<evidence type="ECO:0000255" key="1">
    <source>
        <dbReference type="HAMAP-Rule" id="MF_01085"/>
    </source>
</evidence>
<evidence type="ECO:0000256" key="2">
    <source>
        <dbReference type="SAM" id="MobiDB-lite"/>
    </source>
</evidence>
<keyword id="KW-0997">Cell inner membrane</keyword>
<keyword id="KW-1003">Cell membrane</keyword>
<keyword id="KW-0472">Membrane</keyword>
<keyword id="KW-0812">Transmembrane</keyword>
<keyword id="KW-1133">Transmembrane helix</keyword>
<sequence>MSEPLKPRIDFAEPLKEESTSAFKAQQTFSEAESRTFAPAAIDERPEDEGAAEAAVDAALRPKRSLWRKMVMGGLALFGASVVGQGVQWTMNAWQTQDWVALGGCAAGALIIGAGVGSVVTEWRRLWRLRQRAHERDEARELLHSHSVGKGRAFCEKLAQQAGIDQSHPALQRWYAAIHETQNDREIVGLYANLVQPVLDAQARREISRFAAESTLMIAVSPLALVDMAFIAWRNLRLINRIATLYGIELGYYSRLRLFRLVLLNIAFAGASELVREVGMDWMSQDLAARLSTRAAQGIGAGLLTARLGIKAMELCRPLPWIDNDKPRLGDFRRQLIGQLKETLQKSKSSPEK</sequence>
<accession>B4TJG4</accession>
<name>YCJF_SALHS</name>
<reference key="1">
    <citation type="journal article" date="2011" name="J. Bacteriol.">
        <title>Comparative genomics of 28 Salmonella enterica isolates: evidence for CRISPR-mediated adaptive sublineage evolution.</title>
        <authorList>
            <person name="Fricke W.F."/>
            <person name="Mammel M.K."/>
            <person name="McDermott P.F."/>
            <person name="Tartera C."/>
            <person name="White D.G."/>
            <person name="Leclerc J.E."/>
            <person name="Ravel J."/>
            <person name="Cebula T.A."/>
        </authorList>
    </citation>
    <scope>NUCLEOTIDE SEQUENCE [LARGE SCALE GENOMIC DNA]</scope>
    <source>
        <strain>SL476</strain>
    </source>
</reference>
<comment type="subcellular location">
    <subcellularLocation>
        <location evidence="1">Cell inner membrane</location>
        <topology evidence="1">Multi-pass membrane protein</topology>
    </subcellularLocation>
</comment>
<comment type="similarity">
    <text evidence="1">Belongs to the UPF0283 family.</text>
</comment>